<name>RSMAF_MYCTU</name>
<organism>
    <name type="scientific">Mycobacterium tuberculosis (strain ATCC 25618 / H37Rv)</name>
    <dbReference type="NCBI Taxonomy" id="83332"/>
    <lineage>
        <taxon>Bacteria</taxon>
        <taxon>Bacillati</taxon>
        <taxon>Actinomycetota</taxon>
        <taxon>Actinomycetes</taxon>
        <taxon>Mycobacteriales</taxon>
        <taxon>Mycobacteriaceae</taxon>
        <taxon>Mycobacterium</taxon>
        <taxon>Mycobacterium tuberculosis complex</taxon>
    </lineage>
</organism>
<accession>P9WJ65</accession>
<accession>L7N5D7</accession>
<reference key="1">
    <citation type="journal article" date="1998" name="Nature">
        <title>Deciphering the biology of Mycobacterium tuberculosis from the complete genome sequence.</title>
        <authorList>
            <person name="Cole S.T."/>
            <person name="Brosch R."/>
            <person name="Parkhill J."/>
            <person name="Garnier T."/>
            <person name="Churcher C.M."/>
            <person name="Harris D.E."/>
            <person name="Gordon S.V."/>
            <person name="Eiglmeier K."/>
            <person name="Gas S."/>
            <person name="Barry C.E. III"/>
            <person name="Tekaia F."/>
            <person name="Badcock K."/>
            <person name="Basham D."/>
            <person name="Brown D."/>
            <person name="Chillingworth T."/>
            <person name="Connor R."/>
            <person name="Davies R.M."/>
            <person name="Devlin K."/>
            <person name="Feltwell T."/>
            <person name="Gentles S."/>
            <person name="Hamlin N."/>
            <person name="Holroyd S."/>
            <person name="Hornsby T."/>
            <person name="Jagels K."/>
            <person name="Krogh A."/>
            <person name="McLean J."/>
            <person name="Moule S."/>
            <person name="Murphy L.D."/>
            <person name="Oliver S."/>
            <person name="Osborne J."/>
            <person name="Quail M.A."/>
            <person name="Rajandream M.A."/>
            <person name="Rogers J."/>
            <person name="Rutter S."/>
            <person name="Seeger K."/>
            <person name="Skelton S."/>
            <person name="Squares S."/>
            <person name="Squares R."/>
            <person name="Sulston J.E."/>
            <person name="Taylor K."/>
            <person name="Whitehead S."/>
            <person name="Barrell B.G."/>
        </authorList>
    </citation>
    <scope>NUCLEOTIDE SEQUENCE [LARGE SCALE GENOMIC DNA]</scope>
    <source>
        <strain>ATCC 25618 / H37Rv</strain>
    </source>
</reference>
<gene>
    <name type="primary">rsmA</name>
    <name type="ordered locus">Rv3912</name>
    <name type="ORF">RVBD_3912</name>
</gene>
<protein>
    <recommendedName>
        <fullName>Anti-sigma-M factor RsmA</fullName>
    </recommendedName>
    <alternativeName>
        <fullName>Regulator of SigM</fullName>
    </alternativeName>
    <alternativeName>
        <fullName>Sigma-M anti-sigma factor RsmA</fullName>
    </alternativeName>
</protein>
<comment type="function">
    <text evidence="1">An anti-sigma factor for extracytoplasmic function (ECF) sigma factor SigM. ECF sigma factors are held in an inactive form by an anti-sigma factor until released by regulated intramembrane proteolysis (RIP). RIP occurs when an extracytoplasmic signal triggers a concerted proteolytic cascade to transmit information and elicit cellular responses. The membrane-spanning regulatory substrate protein is first cut extracytoplasmically (site-1 protease, S1P), then within the membrane itself (site-2 protease, S2P, Rip1), while cytoplasmic proteases finish degrading the regulatory protein, liberating the sigma factor (By similarity).</text>
</comment>
<comment type="subunit">
    <text evidence="1">Interacts with ECF RNA polymerase sigma factor SigM; this should inhibit the interaction of SigM with the RNA polymerase catalytic core.</text>
</comment>
<comment type="subcellular location">
    <subcellularLocation>
        <location evidence="3">Cell membrane</location>
        <topology evidence="3">Single-pass membrane protein</topology>
    </subcellularLocation>
</comment>
<comment type="domain">
    <text evidence="1">The cytosolic domain interacts with sigma factor SigM.</text>
</comment>
<sequence>MSAADKDPDKHSADADPPLTVELLADLQAGLLDDATAARIRSRVRSDPQAQQILRALNRVRRDVAAMGADPAWGPAARPAVVDSISAALRSARPNSSPGAAHAARPHVHPVRMIAGAAGLCAVATAIGVGAVVDAPPPAPSAPTTAQHITVSKPAPVIPLSRPQVLDLLHHTPDYGPPGGPLGDPSRRTSCLSGLGYPASTPVLGAQPIDIDARPAVLLVIPADTPDKLAVFAVAPHCSAADTGLLASTVVPRA</sequence>
<feature type="chain" id="PRO_0000422684" description="Anti-sigma-M factor RsmA">
    <location>
        <begin position="1"/>
        <end position="254"/>
    </location>
</feature>
<feature type="topological domain" description="Cytoplasmic" evidence="2">
    <location>
        <begin position="1"/>
        <end position="112"/>
    </location>
</feature>
<feature type="transmembrane region" description="Helical" evidence="2">
    <location>
        <begin position="113"/>
        <end position="133"/>
    </location>
</feature>
<feature type="topological domain" description="Extracellular" evidence="2">
    <location>
        <begin position="134"/>
        <end position="254"/>
    </location>
</feature>
<proteinExistence type="inferred from homology"/>
<keyword id="KW-1003">Cell membrane</keyword>
<keyword id="KW-0472">Membrane</keyword>
<keyword id="KW-1185">Reference proteome</keyword>
<keyword id="KW-0804">Transcription</keyword>
<keyword id="KW-0805">Transcription regulation</keyword>
<keyword id="KW-0812">Transmembrane</keyword>
<keyword id="KW-1133">Transmembrane helix</keyword>
<evidence type="ECO:0000250" key="1"/>
<evidence type="ECO:0000255" key="2"/>
<evidence type="ECO:0000305" key="3"/>
<dbReference type="EMBL" id="AL123456">
    <property type="protein sequence ID" value="CCP46741.1"/>
    <property type="molecule type" value="Genomic_DNA"/>
</dbReference>
<dbReference type="PIR" id="H70850">
    <property type="entry name" value="H70850"/>
</dbReference>
<dbReference type="RefSeq" id="NP_218429.1">
    <property type="nucleotide sequence ID" value="NC_000962.3"/>
</dbReference>
<dbReference type="RefSeq" id="WP_003400148.1">
    <property type="nucleotide sequence ID" value="NZ_NVQJ01000005.1"/>
</dbReference>
<dbReference type="STRING" id="83332.Rv3912"/>
<dbReference type="PaxDb" id="83332-Rv3912"/>
<dbReference type="DNASU" id="886234"/>
<dbReference type="GeneID" id="886234"/>
<dbReference type="KEGG" id="mtu:Rv3912"/>
<dbReference type="KEGG" id="mtv:RVBD_3912"/>
<dbReference type="TubercuList" id="Rv3912"/>
<dbReference type="eggNOG" id="ENOG5031ZVM">
    <property type="taxonomic scope" value="Bacteria"/>
</dbReference>
<dbReference type="InParanoid" id="P9WJ65"/>
<dbReference type="OrthoDB" id="4762032at2"/>
<dbReference type="Proteomes" id="UP000001584">
    <property type="component" value="Chromosome"/>
</dbReference>
<dbReference type="GO" id="GO:0005886">
    <property type="term" value="C:plasma membrane"/>
    <property type="evidence" value="ECO:0007669"/>
    <property type="project" value="UniProtKB-SubCell"/>
</dbReference>